<feature type="chain" id="PRO_0000341658" description="S-formylglutathione hydrolase FrmB">
    <location>
        <begin position="1"/>
        <end position="277"/>
    </location>
</feature>
<feature type="active site" description="Charge relay system" evidence="1">
    <location>
        <position position="145"/>
    </location>
</feature>
<feature type="active site" description="Charge relay system" evidence="1">
    <location>
        <position position="221"/>
    </location>
</feature>
<feature type="active site" description="Charge relay system" evidence="1">
    <location>
        <position position="254"/>
    </location>
</feature>
<keyword id="KW-0378">Hydrolase</keyword>
<keyword id="KW-1185">Reference proteome</keyword>
<keyword id="KW-0719">Serine esterase</keyword>
<sequence length="277" mass="31399">MELIEKHASFGGWQNVYRHYSQSLKCEMNVGVYLPPKAANEKLPVLYWLSGLTCNEQNFITKSGMQRYAAEHNIIVVAPDTSPRGSHVADADRYDLGQGAGFYLNATQAPWNEHYKMYDYIRNELPDLVMQHFPATTRKSISGHSMGGLGALVLALRNPDEYVSVSAFSPIVSPSQVPWGQQAFAAYLGENKDAWLDYDPVSLISQGQRVAEIMVDQGLSDDFYAEQLRTPNLEKICQEMNIKTLIRYHEGYDHSYYFVSSFIGEHIAYHANKLNMR</sequence>
<reference key="1">
    <citation type="journal article" date="2008" name="J. Bacteriol.">
        <title>The pangenome structure of Escherichia coli: comparative genomic analysis of E. coli commensal and pathogenic isolates.</title>
        <authorList>
            <person name="Rasko D.A."/>
            <person name="Rosovitz M.J."/>
            <person name="Myers G.S.A."/>
            <person name="Mongodin E.F."/>
            <person name="Fricke W.F."/>
            <person name="Gajer P."/>
            <person name="Crabtree J."/>
            <person name="Sebaihia M."/>
            <person name="Thomson N.R."/>
            <person name="Chaudhuri R."/>
            <person name="Henderson I.R."/>
            <person name="Sperandio V."/>
            <person name="Ravel J."/>
        </authorList>
    </citation>
    <scope>NUCLEOTIDE SEQUENCE [LARGE SCALE GENOMIC DNA]</scope>
    <source>
        <strain>E24377A / ETEC</strain>
    </source>
</reference>
<evidence type="ECO:0000250" key="1"/>
<evidence type="ECO:0000305" key="2"/>
<proteinExistence type="inferred from homology"/>
<gene>
    <name type="primary">frmB</name>
    <name type="ordered locus">EcE24377A_0380</name>
</gene>
<accession>A7ZIA3</accession>
<name>SFGH1_ECO24</name>
<comment type="function">
    <text evidence="1">Serine hydrolase involved in the detoxification of formaldehyde. Hydrolyzes S-formylglutathione to glutathione and formate (By similarity).</text>
</comment>
<comment type="catalytic activity">
    <reaction>
        <text>S-formylglutathione + H2O = formate + glutathione + H(+)</text>
        <dbReference type="Rhea" id="RHEA:14961"/>
        <dbReference type="ChEBI" id="CHEBI:15377"/>
        <dbReference type="ChEBI" id="CHEBI:15378"/>
        <dbReference type="ChEBI" id="CHEBI:15740"/>
        <dbReference type="ChEBI" id="CHEBI:57688"/>
        <dbReference type="ChEBI" id="CHEBI:57925"/>
        <dbReference type="EC" id="3.1.2.12"/>
    </reaction>
</comment>
<comment type="similarity">
    <text evidence="2">Belongs to the esterase D family.</text>
</comment>
<dbReference type="EC" id="3.1.2.12"/>
<dbReference type="EMBL" id="CP000800">
    <property type="protein sequence ID" value="ABV18859.1"/>
    <property type="molecule type" value="Genomic_DNA"/>
</dbReference>
<dbReference type="SMR" id="A7ZIA3"/>
<dbReference type="ESTHER" id="ecoli-yaim">
    <property type="family name" value="A85-EsteraseD-FGH"/>
</dbReference>
<dbReference type="MEROPS" id="S09.940"/>
<dbReference type="KEGG" id="ecw:EcE24377A_0380"/>
<dbReference type="HOGENOM" id="CLU_056472_0_0_6"/>
<dbReference type="Proteomes" id="UP000001122">
    <property type="component" value="Chromosome"/>
</dbReference>
<dbReference type="GO" id="GO:0005829">
    <property type="term" value="C:cytosol"/>
    <property type="evidence" value="ECO:0007669"/>
    <property type="project" value="TreeGrafter"/>
</dbReference>
<dbReference type="GO" id="GO:0052689">
    <property type="term" value="F:carboxylic ester hydrolase activity"/>
    <property type="evidence" value="ECO:0007669"/>
    <property type="project" value="UniProtKB-KW"/>
</dbReference>
<dbReference type="GO" id="GO:0018738">
    <property type="term" value="F:S-formylglutathione hydrolase activity"/>
    <property type="evidence" value="ECO:0007669"/>
    <property type="project" value="UniProtKB-EC"/>
</dbReference>
<dbReference type="GO" id="GO:0046294">
    <property type="term" value="P:formaldehyde catabolic process"/>
    <property type="evidence" value="ECO:0007669"/>
    <property type="project" value="InterPro"/>
</dbReference>
<dbReference type="FunFam" id="3.40.50.1820:FF:000002">
    <property type="entry name" value="S-formylglutathione hydrolase"/>
    <property type="match status" value="1"/>
</dbReference>
<dbReference type="Gene3D" id="3.40.50.1820">
    <property type="entry name" value="alpha/beta hydrolase"/>
    <property type="match status" value="1"/>
</dbReference>
<dbReference type="InterPro" id="IPR029058">
    <property type="entry name" value="AB_hydrolase_fold"/>
</dbReference>
<dbReference type="InterPro" id="IPR000801">
    <property type="entry name" value="Esterase-like"/>
</dbReference>
<dbReference type="InterPro" id="IPR014186">
    <property type="entry name" value="S-formylglutathione_hydrol"/>
</dbReference>
<dbReference type="NCBIfam" id="TIGR02821">
    <property type="entry name" value="fghA_ester_D"/>
    <property type="match status" value="1"/>
</dbReference>
<dbReference type="PANTHER" id="PTHR10061">
    <property type="entry name" value="S-FORMYLGLUTATHIONE HYDROLASE"/>
    <property type="match status" value="1"/>
</dbReference>
<dbReference type="PANTHER" id="PTHR10061:SF0">
    <property type="entry name" value="S-FORMYLGLUTATHIONE HYDROLASE"/>
    <property type="match status" value="1"/>
</dbReference>
<dbReference type="Pfam" id="PF00756">
    <property type="entry name" value="Esterase"/>
    <property type="match status" value="1"/>
</dbReference>
<dbReference type="SUPFAM" id="SSF53474">
    <property type="entry name" value="alpha/beta-Hydrolases"/>
    <property type="match status" value="1"/>
</dbReference>
<organism>
    <name type="scientific">Escherichia coli O139:H28 (strain E24377A / ETEC)</name>
    <dbReference type="NCBI Taxonomy" id="331111"/>
    <lineage>
        <taxon>Bacteria</taxon>
        <taxon>Pseudomonadati</taxon>
        <taxon>Pseudomonadota</taxon>
        <taxon>Gammaproteobacteria</taxon>
        <taxon>Enterobacterales</taxon>
        <taxon>Enterobacteriaceae</taxon>
        <taxon>Escherichia</taxon>
    </lineage>
</organism>
<protein>
    <recommendedName>
        <fullName>S-formylglutathione hydrolase FrmB</fullName>
        <shortName>FGH</shortName>
        <ecNumber>3.1.2.12</ecNumber>
    </recommendedName>
</protein>